<dbReference type="EC" id="2.3.1.47" evidence="1"/>
<dbReference type="EMBL" id="BA000037">
    <property type="protein sequence ID" value="BAC94092.1"/>
    <property type="molecule type" value="Genomic_DNA"/>
</dbReference>
<dbReference type="RefSeq" id="WP_011150003.1">
    <property type="nucleotide sequence ID" value="NC_005139.1"/>
</dbReference>
<dbReference type="SMR" id="Q7MLU9"/>
<dbReference type="STRING" id="672.VV93_v1c12420"/>
<dbReference type="KEGG" id="vvy:VV1328"/>
<dbReference type="PATRIC" id="fig|196600.6.peg.1318"/>
<dbReference type="eggNOG" id="COG0156">
    <property type="taxonomic scope" value="Bacteria"/>
</dbReference>
<dbReference type="HOGENOM" id="CLU_015846_11_2_6"/>
<dbReference type="UniPathway" id="UPA00078"/>
<dbReference type="Proteomes" id="UP000002675">
    <property type="component" value="Chromosome I"/>
</dbReference>
<dbReference type="GO" id="GO:0008710">
    <property type="term" value="F:8-amino-7-oxononanoate synthase activity"/>
    <property type="evidence" value="ECO:0007669"/>
    <property type="project" value="UniProtKB-UniRule"/>
</dbReference>
<dbReference type="GO" id="GO:0030170">
    <property type="term" value="F:pyridoxal phosphate binding"/>
    <property type="evidence" value="ECO:0007669"/>
    <property type="project" value="UniProtKB-UniRule"/>
</dbReference>
<dbReference type="GO" id="GO:0009102">
    <property type="term" value="P:biotin biosynthetic process"/>
    <property type="evidence" value="ECO:0007669"/>
    <property type="project" value="UniProtKB-UniRule"/>
</dbReference>
<dbReference type="Gene3D" id="3.90.1150.10">
    <property type="entry name" value="Aspartate Aminotransferase, domain 1"/>
    <property type="match status" value="1"/>
</dbReference>
<dbReference type="Gene3D" id="3.40.640.10">
    <property type="entry name" value="Type I PLP-dependent aspartate aminotransferase-like (Major domain)"/>
    <property type="match status" value="1"/>
</dbReference>
<dbReference type="HAMAP" id="MF_01693">
    <property type="entry name" value="BioF_aminotrans_2"/>
    <property type="match status" value="1"/>
</dbReference>
<dbReference type="InterPro" id="IPR004839">
    <property type="entry name" value="Aminotransferase_I/II_large"/>
</dbReference>
<dbReference type="InterPro" id="IPR050087">
    <property type="entry name" value="AON_synthase_class-II"/>
</dbReference>
<dbReference type="InterPro" id="IPR004723">
    <property type="entry name" value="AONS_Archaea/Proteobacteria"/>
</dbReference>
<dbReference type="InterPro" id="IPR022834">
    <property type="entry name" value="AONS_Proteobacteria"/>
</dbReference>
<dbReference type="InterPro" id="IPR015424">
    <property type="entry name" value="PyrdxlP-dep_Trfase"/>
</dbReference>
<dbReference type="InterPro" id="IPR015421">
    <property type="entry name" value="PyrdxlP-dep_Trfase_major"/>
</dbReference>
<dbReference type="InterPro" id="IPR015422">
    <property type="entry name" value="PyrdxlP-dep_Trfase_small"/>
</dbReference>
<dbReference type="NCBIfam" id="TIGR00858">
    <property type="entry name" value="bioF"/>
    <property type="match status" value="1"/>
</dbReference>
<dbReference type="PANTHER" id="PTHR13693:SF100">
    <property type="entry name" value="8-AMINO-7-OXONONANOATE SYNTHASE"/>
    <property type="match status" value="1"/>
</dbReference>
<dbReference type="PANTHER" id="PTHR13693">
    <property type="entry name" value="CLASS II AMINOTRANSFERASE/8-AMINO-7-OXONONANOATE SYNTHASE"/>
    <property type="match status" value="1"/>
</dbReference>
<dbReference type="Pfam" id="PF00155">
    <property type="entry name" value="Aminotran_1_2"/>
    <property type="match status" value="1"/>
</dbReference>
<dbReference type="SUPFAM" id="SSF53383">
    <property type="entry name" value="PLP-dependent transferases"/>
    <property type="match status" value="1"/>
</dbReference>
<dbReference type="PROSITE" id="PS00599">
    <property type="entry name" value="AA_TRANSFER_CLASS_2"/>
    <property type="match status" value="1"/>
</dbReference>
<name>BIOF_VIBVY</name>
<reference key="1">
    <citation type="journal article" date="2003" name="Genome Res.">
        <title>Comparative genome analysis of Vibrio vulnificus, a marine pathogen.</title>
        <authorList>
            <person name="Chen C.-Y."/>
            <person name="Wu K.-M."/>
            <person name="Chang Y.-C."/>
            <person name="Chang C.-H."/>
            <person name="Tsai H.-C."/>
            <person name="Liao T.-L."/>
            <person name="Liu Y.-M."/>
            <person name="Chen H.-J."/>
            <person name="Shen A.B.-T."/>
            <person name="Li J.-C."/>
            <person name="Su T.-L."/>
            <person name="Shao C.-P."/>
            <person name="Lee C.-T."/>
            <person name="Hor L.-I."/>
            <person name="Tsai S.-F."/>
        </authorList>
    </citation>
    <scope>NUCLEOTIDE SEQUENCE [LARGE SCALE GENOMIC DNA]</scope>
    <source>
        <strain>YJ016</strain>
    </source>
</reference>
<proteinExistence type="inferred from homology"/>
<feature type="chain" id="PRO_0000381139" description="8-amino-7-oxononanoate synthase">
    <location>
        <begin position="1"/>
        <end position="385"/>
    </location>
</feature>
<feature type="binding site" evidence="1">
    <location>
        <position position="23"/>
    </location>
    <ligand>
        <name>substrate</name>
    </ligand>
</feature>
<feature type="binding site" evidence="1">
    <location>
        <begin position="110"/>
        <end position="111"/>
    </location>
    <ligand>
        <name>pyridoxal 5'-phosphate</name>
        <dbReference type="ChEBI" id="CHEBI:597326"/>
    </ligand>
</feature>
<feature type="binding site" evidence="1">
    <location>
        <position position="135"/>
    </location>
    <ligand>
        <name>substrate</name>
    </ligand>
</feature>
<feature type="binding site" evidence="1">
    <location>
        <position position="180"/>
    </location>
    <ligand>
        <name>pyridoxal 5'-phosphate</name>
        <dbReference type="ChEBI" id="CHEBI:597326"/>
    </ligand>
</feature>
<feature type="binding site" evidence="1">
    <location>
        <position position="208"/>
    </location>
    <ligand>
        <name>pyridoxal 5'-phosphate</name>
        <dbReference type="ChEBI" id="CHEBI:597326"/>
    </ligand>
</feature>
<feature type="binding site" evidence="1">
    <location>
        <position position="234"/>
    </location>
    <ligand>
        <name>pyridoxal 5'-phosphate</name>
        <dbReference type="ChEBI" id="CHEBI:597326"/>
    </ligand>
</feature>
<feature type="binding site" evidence="1">
    <location>
        <position position="350"/>
    </location>
    <ligand>
        <name>substrate</name>
    </ligand>
</feature>
<feature type="modified residue" description="N6-(pyridoxal phosphate)lysine" evidence="1">
    <location>
        <position position="237"/>
    </location>
</feature>
<accession>Q7MLU9</accession>
<gene>
    <name evidence="1" type="primary">bioF</name>
    <name type="ordered locus">VV1328</name>
</gene>
<protein>
    <recommendedName>
        <fullName evidence="1">8-amino-7-oxononanoate synthase</fullName>
        <shortName evidence="1">AONS</shortName>
        <ecNumber evidence="1">2.3.1.47</ecNumber>
    </recommendedName>
    <alternativeName>
        <fullName evidence="1">7-keto-8-amino-pelargonic acid synthase</fullName>
        <shortName evidence="1">7-KAP synthase</shortName>
        <shortName evidence="1">KAPA synthase</shortName>
    </alternativeName>
    <alternativeName>
        <fullName evidence="1">8-amino-7-ketopelargonate synthase</fullName>
    </alternativeName>
</protein>
<organism>
    <name type="scientific">Vibrio vulnificus (strain YJ016)</name>
    <dbReference type="NCBI Taxonomy" id="196600"/>
    <lineage>
        <taxon>Bacteria</taxon>
        <taxon>Pseudomonadati</taxon>
        <taxon>Pseudomonadota</taxon>
        <taxon>Gammaproteobacteria</taxon>
        <taxon>Vibrionales</taxon>
        <taxon>Vibrionaceae</taxon>
        <taxon>Vibrio</taxon>
    </lineage>
</organism>
<keyword id="KW-0093">Biotin biosynthesis</keyword>
<keyword id="KW-0663">Pyridoxal phosphate</keyword>
<keyword id="KW-0808">Transferase</keyword>
<evidence type="ECO:0000255" key="1">
    <source>
        <dbReference type="HAMAP-Rule" id="MF_01693"/>
    </source>
</evidence>
<comment type="function">
    <text evidence="1">Catalyzes the decarboxylative condensation of pimeloyl-[acyl-carrier protein] and L-alanine to produce 8-amino-7-oxononanoate (AON), [acyl-carrier protein], and carbon dioxide.</text>
</comment>
<comment type="catalytic activity">
    <reaction evidence="1">
        <text>6-carboxyhexanoyl-[ACP] + L-alanine + H(+) = (8S)-8-amino-7-oxononanoate + holo-[ACP] + CO2</text>
        <dbReference type="Rhea" id="RHEA:42288"/>
        <dbReference type="Rhea" id="RHEA-COMP:9685"/>
        <dbReference type="Rhea" id="RHEA-COMP:9955"/>
        <dbReference type="ChEBI" id="CHEBI:15378"/>
        <dbReference type="ChEBI" id="CHEBI:16526"/>
        <dbReference type="ChEBI" id="CHEBI:57972"/>
        <dbReference type="ChEBI" id="CHEBI:64479"/>
        <dbReference type="ChEBI" id="CHEBI:78846"/>
        <dbReference type="ChEBI" id="CHEBI:149468"/>
        <dbReference type="EC" id="2.3.1.47"/>
    </reaction>
</comment>
<comment type="cofactor">
    <cofactor evidence="1">
        <name>pyridoxal 5'-phosphate</name>
        <dbReference type="ChEBI" id="CHEBI:597326"/>
    </cofactor>
</comment>
<comment type="pathway">
    <text evidence="1">Cofactor biosynthesis; biotin biosynthesis.</text>
</comment>
<comment type="subunit">
    <text evidence="1">Homodimer.</text>
</comment>
<comment type="similarity">
    <text evidence="1">Belongs to the class-II pyridoxal-phosphate-dependent aminotransferase family. BioF subfamily.</text>
</comment>
<sequence length="385" mass="42070">MTQAFNERIVQALKQRREQGLNRQSEVIFSGNQTVLEHQGKRYLNFSANDYLGLANDQSLVRAWQQGLSLYGCGSGASPLVTGYTPAHSNLAASLCDWLGYESATLFGSGFSANQALLFALLEKGDLLVQDKLNHASLIEAGLLSPASMKRFKHNDLQALDAILNRSDCPSLVVTEGVFSMDGDCSPLAEMHALTQRYSASLMVDDAHGVGVLGEEGRGSCALASVKPDFLVVTFGKAFGLSGAALLTDKSSGDFLAQFARHHVYSTALPPAQAFALTHAVEMIRTQQWRRDKLNELQTLFAEYLGEHDSFVATQTPIKPWLIGETQQAVMVAQRCREQGIWLTAIRPPTVPQNTARLRITLSANHTKEQMHTLAQVLLTVTGEH</sequence>